<accession>Q2Y738</accession>
<dbReference type="EMBL" id="CP000103">
    <property type="protein sequence ID" value="ABB75433.1"/>
    <property type="molecule type" value="Genomic_DNA"/>
</dbReference>
<dbReference type="RefSeq" id="WP_011381442.1">
    <property type="nucleotide sequence ID" value="NC_007614.1"/>
</dbReference>
<dbReference type="SMR" id="Q2Y738"/>
<dbReference type="STRING" id="323848.Nmul_A2140"/>
<dbReference type="KEGG" id="nmu:Nmul_A2140"/>
<dbReference type="eggNOG" id="COG0267">
    <property type="taxonomic scope" value="Bacteria"/>
</dbReference>
<dbReference type="HOGENOM" id="CLU_190949_1_1_4"/>
<dbReference type="OrthoDB" id="21586at2"/>
<dbReference type="Proteomes" id="UP000002718">
    <property type="component" value="Chromosome"/>
</dbReference>
<dbReference type="GO" id="GO:0022625">
    <property type="term" value="C:cytosolic large ribosomal subunit"/>
    <property type="evidence" value="ECO:0007669"/>
    <property type="project" value="TreeGrafter"/>
</dbReference>
<dbReference type="GO" id="GO:0003735">
    <property type="term" value="F:structural constituent of ribosome"/>
    <property type="evidence" value="ECO:0007669"/>
    <property type="project" value="InterPro"/>
</dbReference>
<dbReference type="GO" id="GO:0006412">
    <property type="term" value="P:translation"/>
    <property type="evidence" value="ECO:0007669"/>
    <property type="project" value="UniProtKB-UniRule"/>
</dbReference>
<dbReference type="Gene3D" id="2.20.28.120">
    <property type="entry name" value="Ribosomal protein L33"/>
    <property type="match status" value="1"/>
</dbReference>
<dbReference type="HAMAP" id="MF_00294">
    <property type="entry name" value="Ribosomal_bL33"/>
    <property type="match status" value="1"/>
</dbReference>
<dbReference type="InterPro" id="IPR001705">
    <property type="entry name" value="Ribosomal_bL33"/>
</dbReference>
<dbReference type="InterPro" id="IPR018264">
    <property type="entry name" value="Ribosomal_bL33_CS"/>
</dbReference>
<dbReference type="InterPro" id="IPR038584">
    <property type="entry name" value="Ribosomal_bL33_sf"/>
</dbReference>
<dbReference type="InterPro" id="IPR011332">
    <property type="entry name" value="Ribosomal_zn-bd"/>
</dbReference>
<dbReference type="NCBIfam" id="NF001860">
    <property type="entry name" value="PRK00595.1"/>
    <property type="match status" value="1"/>
</dbReference>
<dbReference type="NCBIfam" id="TIGR01023">
    <property type="entry name" value="rpmG_bact"/>
    <property type="match status" value="1"/>
</dbReference>
<dbReference type="PANTHER" id="PTHR15238">
    <property type="entry name" value="54S RIBOSOMAL PROTEIN L39, MITOCHONDRIAL"/>
    <property type="match status" value="1"/>
</dbReference>
<dbReference type="PANTHER" id="PTHR15238:SF1">
    <property type="entry name" value="LARGE RIBOSOMAL SUBUNIT PROTEIN BL33M"/>
    <property type="match status" value="1"/>
</dbReference>
<dbReference type="Pfam" id="PF00471">
    <property type="entry name" value="Ribosomal_L33"/>
    <property type="match status" value="1"/>
</dbReference>
<dbReference type="SUPFAM" id="SSF57829">
    <property type="entry name" value="Zn-binding ribosomal proteins"/>
    <property type="match status" value="1"/>
</dbReference>
<dbReference type="PROSITE" id="PS00582">
    <property type="entry name" value="RIBOSOMAL_L33"/>
    <property type="match status" value="1"/>
</dbReference>
<protein>
    <recommendedName>
        <fullName evidence="1">Large ribosomal subunit protein bL33</fullName>
    </recommendedName>
    <alternativeName>
        <fullName evidence="2">50S ribosomal protein L33</fullName>
    </alternativeName>
</protein>
<evidence type="ECO:0000255" key="1">
    <source>
        <dbReference type="HAMAP-Rule" id="MF_00294"/>
    </source>
</evidence>
<evidence type="ECO:0000305" key="2"/>
<reference key="1">
    <citation type="submission" date="2005-08" db="EMBL/GenBank/DDBJ databases">
        <title>Complete sequence of chromosome 1 of Nitrosospira multiformis ATCC 25196.</title>
        <authorList>
            <person name="Copeland A."/>
            <person name="Lucas S."/>
            <person name="Lapidus A."/>
            <person name="Barry K."/>
            <person name="Detter J.C."/>
            <person name="Glavina T."/>
            <person name="Hammon N."/>
            <person name="Israni S."/>
            <person name="Pitluck S."/>
            <person name="Chain P."/>
            <person name="Malfatti S."/>
            <person name="Shin M."/>
            <person name="Vergez L."/>
            <person name="Schmutz J."/>
            <person name="Larimer F."/>
            <person name="Land M."/>
            <person name="Hauser L."/>
            <person name="Kyrpides N."/>
            <person name="Lykidis A."/>
            <person name="Richardson P."/>
        </authorList>
    </citation>
    <scope>NUCLEOTIDE SEQUENCE [LARGE SCALE GENOMIC DNA]</scope>
    <source>
        <strain>ATCC 25196 / NCIMB 11849 / C 71</strain>
    </source>
</reference>
<keyword id="KW-1185">Reference proteome</keyword>
<keyword id="KW-0687">Ribonucleoprotein</keyword>
<keyword id="KW-0689">Ribosomal protein</keyword>
<feature type="chain" id="PRO_0000356591" description="Large ribosomal subunit protein bL33">
    <location>
        <begin position="1"/>
        <end position="51"/>
    </location>
</feature>
<name>RL33_NITMU</name>
<proteinExistence type="inferred from homology"/>
<comment type="similarity">
    <text evidence="1">Belongs to the bacterial ribosomal protein bL33 family.</text>
</comment>
<sequence length="51" mass="5995">MREKIKLESSAGTGHFYTTTKNKRTTPEKIEITKFDPVARKHVKYKETKLK</sequence>
<gene>
    <name evidence="1" type="primary">rpmG</name>
    <name type="ordered locus">Nmul_A2140</name>
</gene>
<organism>
    <name type="scientific">Nitrosospira multiformis (strain ATCC 25196 / NCIMB 11849 / C 71)</name>
    <dbReference type="NCBI Taxonomy" id="323848"/>
    <lineage>
        <taxon>Bacteria</taxon>
        <taxon>Pseudomonadati</taxon>
        <taxon>Pseudomonadota</taxon>
        <taxon>Betaproteobacteria</taxon>
        <taxon>Nitrosomonadales</taxon>
        <taxon>Nitrosomonadaceae</taxon>
        <taxon>Nitrosospira</taxon>
    </lineage>
</organism>